<comment type="function">
    <text evidence="4 8">Calmodulin-dependent cyclic nucleotide phosphodiesterase with a dual specificity for the second messengers cAMP and cGMP, which are key regulators of many important physiological processes. Has a high affinity for both cAMP and cGMP (PubMed:7568196). Modulates the amplitude and duration of the cAMP signal in sensory cilia in response to odorant stimulation, hence contributing to the generation of action potentials. Regulates smooth muscle cell proliferation. Regulates the stability of growth factor receptors, including PDGFRB (By similarity).</text>
</comment>
<comment type="catalytic activity">
    <reaction evidence="8">
        <text>a nucleoside 3',5'-cyclic phosphate + H2O = a nucleoside 5'-phosphate + H(+)</text>
        <dbReference type="Rhea" id="RHEA:14653"/>
        <dbReference type="ChEBI" id="CHEBI:15377"/>
        <dbReference type="ChEBI" id="CHEBI:15378"/>
        <dbReference type="ChEBI" id="CHEBI:57867"/>
        <dbReference type="ChEBI" id="CHEBI:58464"/>
        <dbReference type="EC" id="3.1.4.17"/>
    </reaction>
    <physiologicalReaction direction="left-to-right" evidence="11">
        <dbReference type="Rhea" id="RHEA:14654"/>
    </physiologicalReaction>
</comment>
<comment type="catalytic activity">
    <reaction evidence="8">
        <text>3',5'-cyclic GMP + H2O = GMP + H(+)</text>
        <dbReference type="Rhea" id="RHEA:16957"/>
        <dbReference type="ChEBI" id="CHEBI:15377"/>
        <dbReference type="ChEBI" id="CHEBI:15378"/>
        <dbReference type="ChEBI" id="CHEBI:57746"/>
        <dbReference type="ChEBI" id="CHEBI:58115"/>
    </reaction>
    <physiologicalReaction direction="left-to-right" evidence="11">
        <dbReference type="Rhea" id="RHEA:16958"/>
    </physiologicalReaction>
</comment>
<comment type="catalytic activity">
    <reaction evidence="8">
        <text>3',5'-cyclic AMP + H2O = AMP + H(+)</text>
        <dbReference type="Rhea" id="RHEA:25277"/>
        <dbReference type="ChEBI" id="CHEBI:15377"/>
        <dbReference type="ChEBI" id="CHEBI:15378"/>
        <dbReference type="ChEBI" id="CHEBI:58165"/>
        <dbReference type="ChEBI" id="CHEBI:456215"/>
    </reaction>
    <physiologicalReaction direction="left-to-right" evidence="11">
        <dbReference type="Rhea" id="RHEA:25278"/>
    </physiologicalReaction>
</comment>
<comment type="cofactor">
    <cofactor evidence="3">
        <name>Zn(2+)</name>
        <dbReference type="ChEBI" id="CHEBI:29105"/>
    </cofactor>
    <text evidence="3">Binds 2 divalent metal cations per subunit. Site 1 may preferentially bind zinc ions.</text>
</comment>
<comment type="cofactor">
    <cofactor evidence="3">
        <name>Mg(2+)</name>
        <dbReference type="ChEBI" id="CHEBI:18420"/>
    </cofactor>
    <text evidence="3">Binds 2 divalent metal cations per subunit. Site 2 has a preference for magnesium ions.</text>
</comment>
<comment type="activity regulation">
    <text evidence="8">Type I PDE are activated by the binding of calmodulin in the presence of Ca(2+).</text>
</comment>
<comment type="biophysicochemical properties">
    <kinetics>
        <KM evidence="8">1.2 uM for 3',5'-cyclic AMP (at pH 7.5)</KM>
        <KM evidence="8">1.1 uM for 3',5'-cyclic GMP (at pH 7.5)</KM>
    </kinetics>
</comment>
<comment type="subunit">
    <text evidence="2">Homodimer.</text>
</comment>
<comment type="subcellular location">
    <subcellularLocation>
        <location evidence="5">Lysosome</location>
    </subcellularLocation>
</comment>
<comment type="tissue specificity">
    <text evidence="8">Highly expressed in olfactory epithelium and at moderate levels, in cerebellum, as well as weakly in forebrain, testis, heart and lung (PubMed:7568196). In the olfactory epithelium, expressed by sensory neurons, but not epithelial cells (PubMed:7568196).</text>
</comment>
<comment type="similarity">
    <text evidence="10">Belongs to the cyclic nucleotide phosphodiesterase family. PDE1 subfamily.</text>
</comment>
<dbReference type="EC" id="3.1.4.17" evidence="8"/>
<dbReference type="EMBL" id="L41045">
    <property type="protein sequence ID" value="AAB00868.1"/>
    <property type="molecule type" value="mRNA"/>
</dbReference>
<dbReference type="PIR" id="T10796">
    <property type="entry name" value="T10796"/>
</dbReference>
<dbReference type="RefSeq" id="NP_112340.1">
    <property type="nucleotide sequence ID" value="NM_031078.2"/>
</dbReference>
<dbReference type="SMR" id="Q63421"/>
<dbReference type="FunCoup" id="Q63421">
    <property type="interactions" value="2382"/>
</dbReference>
<dbReference type="STRING" id="10116.ENSRNOP00000017531"/>
<dbReference type="BindingDB" id="Q63421"/>
<dbReference type="ChEMBL" id="CHEMBL2111322"/>
<dbReference type="DrugCentral" id="Q63421"/>
<dbReference type="iPTMnet" id="Q63421"/>
<dbReference type="PhosphoSitePlus" id="Q63421"/>
<dbReference type="PaxDb" id="10116-ENSRNOP00000017531"/>
<dbReference type="GeneID" id="81742"/>
<dbReference type="KEGG" id="rno:81742"/>
<dbReference type="UCSC" id="RGD:68332">
    <property type="organism name" value="rat"/>
</dbReference>
<dbReference type="AGR" id="RGD:68332"/>
<dbReference type="CTD" id="5137"/>
<dbReference type="RGD" id="68332">
    <property type="gene designation" value="Pde1c"/>
</dbReference>
<dbReference type="eggNOG" id="KOG3688">
    <property type="taxonomic scope" value="Eukaryota"/>
</dbReference>
<dbReference type="InParanoid" id="Q63421"/>
<dbReference type="OrthoDB" id="69111at9989"/>
<dbReference type="PhylomeDB" id="Q63421"/>
<dbReference type="Reactome" id="R-RNO-111957">
    <property type="pathway name" value="Cam-PDE 1 activation"/>
</dbReference>
<dbReference type="PRO" id="PR:Q63421"/>
<dbReference type="Proteomes" id="UP000002494">
    <property type="component" value="Unplaced"/>
</dbReference>
<dbReference type="GO" id="GO:0005929">
    <property type="term" value="C:cilium"/>
    <property type="evidence" value="ECO:0000266"/>
    <property type="project" value="RGD"/>
</dbReference>
<dbReference type="GO" id="GO:0005764">
    <property type="term" value="C:lysosome"/>
    <property type="evidence" value="ECO:0000250"/>
    <property type="project" value="UniProtKB"/>
</dbReference>
<dbReference type="GO" id="GO:0043025">
    <property type="term" value="C:neuronal cell body"/>
    <property type="evidence" value="ECO:0000314"/>
    <property type="project" value="RGD"/>
</dbReference>
<dbReference type="GO" id="GO:0004115">
    <property type="term" value="F:3',5'-cyclic-AMP phosphodiesterase activity"/>
    <property type="evidence" value="ECO:0000266"/>
    <property type="project" value="RGD"/>
</dbReference>
<dbReference type="GO" id="GO:0047555">
    <property type="term" value="F:3',5'-cyclic-GMP phosphodiesterase activity"/>
    <property type="evidence" value="ECO:0000266"/>
    <property type="project" value="RGD"/>
</dbReference>
<dbReference type="GO" id="GO:0005516">
    <property type="term" value="F:calmodulin binding"/>
    <property type="evidence" value="ECO:0007669"/>
    <property type="project" value="UniProtKB-KW"/>
</dbReference>
<dbReference type="GO" id="GO:0048101">
    <property type="term" value="F:calmodulin-activated 3',5'-cyclic-GMP phosphodiesterase activity"/>
    <property type="evidence" value="ECO:0000314"/>
    <property type="project" value="MGI"/>
</dbReference>
<dbReference type="GO" id="GO:0004117">
    <property type="term" value="F:calmodulin-activated dual specificity 3',5'-cyclic-GMP, 3',5'-cyclic-AMP phosphodiesterase activity"/>
    <property type="evidence" value="ECO:0000314"/>
    <property type="project" value="MGI"/>
</dbReference>
<dbReference type="GO" id="GO:0030552">
    <property type="term" value="F:cAMP binding"/>
    <property type="evidence" value="ECO:0000314"/>
    <property type="project" value="RGD"/>
</dbReference>
<dbReference type="GO" id="GO:0046872">
    <property type="term" value="F:metal ion binding"/>
    <property type="evidence" value="ECO:0007669"/>
    <property type="project" value="UniProtKB-KW"/>
</dbReference>
<dbReference type="GO" id="GO:0019933">
    <property type="term" value="P:cAMP-mediated signaling"/>
    <property type="evidence" value="ECO:0000318"/>
    <property type="project" value="GO_Central"/>
</dbReference>
<dbReference type="GO" id="GO:0061179">
    <property type="term" value="P:negative regulation of insulin secretion involved in cellular response to glucose stimulus"/>
    <property type="evidence" value="ECO:0000315"/>
    <property type="project" value="RGD"/>
</dbReference>
<dbReference type="GO" id="GO:0051592">
    <property type="term" value="P:response to calcium ion"/>
    <property type="evidence" value="ECO:0000314"/>
    <property type="project" value="MGI"/>
</dbReference>
<dbReference type="GO" id="GO:0007608">
    <property type="term" value="P:sensory perception of smell"/>
    <property type="evidence" value="ECO:0000266"/>
    <property type="project" value="RGD"/>
</dbReference>
<dbReference type="CDD" id="cd00077">
    <property type="entry name" value="HDc"/>
    <property type="match status" value="1"/>
</dbReference>
<dbReference type="FunFam" id="1.10.1300.10:FF:000010">
    <property type="entry name" value="Phosphodiesterase"/>
    <property type="match status" value="1"/>
</dbReference>
<dbReference type="Gene3D" id="1.10.1300.10">
    <property type="entry name" value="3'5'-cyclic nucleotide phosphodiesterase, catalytic domain"/>
    <property type="match status" value="1"/>
</dbReference>
<dbReference type="InterPro" id="IPR003607">
    <property type="entry name" value="HD/PDEase_dom"/>
</dbReference>
<dbReference type="InterPro" id="IPR023088">
    <property type="entry name" value="PDEase"/>
</dbReference>
<dbReference type="InterPro" id="IPR002073">
    <property type="entry name" value="PDEase_catalytic_dom"/>
</dbReference>
<dbReference type="InterPro" id="IPR036971">
    <property type="entry name" value="PDEase_catalytic_dom_sf"/>
</dbReference>
<dbReference type="InterPro" id="IPR023174">
    <property type="entry name" value="PDEase_CS"/>
</dbReference>
<dbReference type="InterPro" id="IPR013706">
    <property type="entry name" value="PDEase_N"/>
</dbReference>
<dbReference type="PANTHER" id="PTHR11347">
    <property type="entry name" value="CYCLIC NUCLEOTIDE PHOSPHODIESTERASE"/>
    <property type="match status" value="1"/>
</dbReference>
<dbReference type="Pfam" id="PF00233">
    <property type="entry name" value="PDEase_I"/>
    <property type="match status" value="1"/>
</dbReference>
<dbReference type="Pfam" id="PF08499">
    <property type="entry name" value="PDEase_I_N"/>
    <property type="match status" value="1"/>
</dbReference>
<dbReference type="PRINTS" id="PR00387">
    <property type="entry name" value="PDIESTERASE1"/>
</dbReference>
<dbReference type="SMART" id="SM00471">
    <property type="entry name" value="HDc"/>
    <property type="match status" value="1"/>
</dbReference>
<dbReference type="SUPFAM" id="SSF109604">
    <property type="entry name" value="HD-domain/PDEase-like"/>
    <property type="match status" value="1"/>
</dbReference>
<dbReference type="PROSITE" id="PS00126">
    <property type="entry name" value="PDEASE_I_1"/>
    <property type="match status" value="1"/>
</dbReference>
<dbReference type="PROSITE" id="PS51845">
    <property type="entry name" value="PDEASE_I_2"/>
    <property type="match status" value="1"/>
</dbReference>
<proteinExistence type="evidence at protein level"/>
<accession>Q63421</accession>
<gene>
    <name evidence="12" type="primary">Pde1c</name>
    <name evidence="9" type="synonym">Pde1c2</name>
</gene>
<feature type="chain" id="PRO_0000198794" description="Dual specificity calcium/calmodulin-dependent 3',5'-cyclic nucleotide phosphodiesterase 1C">
    <location>
        <begin position="1"/>
        <end position="768"/>
    </location>
</feature>
<feature type="domain" description="PDEase" evidence="6">
    <location>
        <begin position="211"/>
        <end position="588"/>
    </location>
</feature>
<feature type="region of interest" description="Calmodulin-binding" evidence="2">
    <location>
        <begin position="183"/>
        <end position="206"/>
    </location>
</feature>
<feature type="region of interest" description="Disordered" evidence="7">
    <location>
        <begin position="513"/>
        <end position="557"/>
    </location>
</feature>
<feature type="region of interest" description="Disordered" evidence="7">
    <location>
        <begin position="584"/>
        <end position="719"/>
    </location>
</feature>
<feature type="compositionally biased region" description="Polar residues" evidence="7">
    <location>
        <begin position="516"/>
        <end position="536"/>
    </location>
</feature>
<feature type="compositionally biased region" description="Polar residues" evidence="7">
    <location>
        <begin position="543"/>
        <end position="557"/>
    </location>
</feature>
<feature type="compositionally biased region" description="Basic and acidic residues" evidence="7">
    <location>
        <begin position="584"/>
        <end position="614"/>
    </location>
</feature>
<feature type="compositionally biased region" description="Polar residues" evidence="7">
    <location>
        <begin position="631"/>
        <end position="641"/>
    </location>
</feature>
<feature type="compositionally biased region" description="Basic and acidic residues" evidence="7">
    <location>
        <begin position="642"/>
        <end position="659"/>
    </location>
</feature>
<feature type="compositionally biased region" description="Basic and acidic residues" evidence="7">
    <location>
        <begin position="665"/>
        <end position="692"/>
    </location>
</feature>
<feature type="compositionally biased region" description="Low complexity" evidence="7">
    <location>
        <begin position="698"/>
        <end position="712"/>
    </location>
</feature>
<feature type="active site" description="Proton donor" evidence="1">
    <location>
        <position position="288"/>
    </location>
</feature>
<feature type="binding site" evidence="3">
    <location>
        <position position="292"/>
    </location>
    <ligand>
        <name>Zn(2+)</name>
        <dbReference type="ChEBI" id="CHEBI:29105"/>
    </ligand>
</feature>
<feature type="binding site" evidence="3">
    <location>
        <position position="328"/>
    </location>
    <ligand>
        <name>Zn(2+)</name>
        <dbReference type="ChEBI" id="CHEBI:29105"/>
    </ligand>
</feature>
<feature type="binding site" evidence="3">
    <location>
        <position position="329"/>
    </location>
    <ligand>
        <name>Mg(2+)</name>
        <dbReference type="ChEBI" id="CHEBI:18420"/>
    </ligand>
</feature>
<feature type="binding site" evidence="3">
    <location>
        <position position="329"/>
    </location>
    <ligand>
        <name>Zn(2+)</name>
        <dbReference type="ChEBI" id="CHEBI:29105"/>
    </ligand>
</feature>
<feature type="binding site" evidence="3">
    <location>
        <position position="436"/>
    </location>
    <ligand>
        <name>Zn(2+)</name>
        <dbReference type="ChEBI" id="CHEBI:29105"/>
    </ligand>
</feature>
<feature type="modified residue" description="N-acetylmethionine" evidence="4">
    <location>
        <position position="1"/>
    </location>
</feature>
<sequence>MTDTSHKKEGFKKCRSATFSIDGYSFTIVANEAGDKNARPLARFSRSKSQNCLWNSLIDGLTGNVKEKPRPTIVQDTRPPEEILADELPQLDSPEALVKTSFRLRSLVKQLERGEASVVDLKKNLEYAATVLESVYIDETRRLLDTEDELSDIQSDAVPSEVRDWLASTFTRQMGMMLRRSDEKPRFKSIVHAVQAGIFVERMYRRTSNMVGLSYPPAVIDALKDVDTWSFDVFSLNEASGDHALKFIFYELLTRYDLISRFKIPISALVSFVEALEVGYSKHKNPYHNLMHAADVTQTVHYLLYKTGVANWLTELEIFAIIFSAAIHDYEHTGTTNNFHIQTRSDPAILYNDRSVLENHHLSAAYRLLQEDEEMNILVNLSKDDWREFRTLVIEMVMATDMSCHFQQIKAMKTALQQPEAIEKPKALSLMLHTADISHPAKAWDLHHRWTMSLLEEFFRQGDREAELGLPFSPLCDRKSTMVAQSQVGFIDFIVEPTFTVLTDMTEKIVSPLIDETSQTGGTGQRRSSLNSINSSDAKRSGVKSSGSEGSAPINNSVIPVDYKSFKATWTEVVQINRERWRAKVPKEEKAKKEAEEKARLAAEEKQKEMEAKSQAEQGTTSKAEKKTSGETKGQVNGTRTSKGDNPRGKNSKGDKAGEKQQNGDLKDGKNKADKKDHSNTGNESKKADGTKKRSHGSPAPSTSSTSRLTLPVIKPPLRHFKRPAYASSSYAPSVPKKTDDHPVRYKMLDQRIKIKKIQNISHHWNKK</sequence>
<reference key="1">
    <citation type="journal article" date="1995" name="Proc. Natl. Acad. Sci. U.S.A.">
        <title>Molecular cloning and characterization of a calmodulin-dependent phosphodiesterase enriched in olfactory sensory neurons.</title>
        <authorList>
            <person name="Yan C."/>
            <person name="Zhao A.Z."/>
            <person name="Bentley J.K."/>
            <person name="Loughney K."/>
            <person name="Ferguson K."/>
            <person name="Beavo J.A."/>
        </authorList>
    </citation>
    <scope>NUCLEOTIDE SEQUENCE [MRNA]</scope>
    <scope>FUNCTION</scope>
    <scope>CATALYTIC ACTIVITY</scope>
    <scope>ACTIVITY REGULATION</scope>
    <scope>BIOPHYSICOCHEMICAL PROPERTIES</scope>
    <scope>TISSUE SPECIFICITY</scope>
    <source>
        <tissue>Olfactory epithelium</tissue>
    </source>
</reference>
<reference key="2">
    <citation type="journal article" date="2012" name="Nat. Commun.">
        <title>Quantitative maps of protein phosphorylation sites across 14 different rat organs and tissues.</title>
        <authorList>
            <person name="Lundby A."/>
            <person name="Secher A."/>
            <person name="Lage K."/>
            <person name="Nordsborg N.B."/>
            <person name="Dmytriyev A."/>
            <person name="Lundby C."/>
            <person name="Olsen J.V."/>
        </authorList>
    </citation>
    <scope>IDENTIFICATION BY MASS SPECTROMETRY [LARGE SCALE ANALYSIS]</scope>
</reference>
<name>PDE1C_RAT</name>
<protein>
    <recommendedName>
        <fullName evidence="11">Dual specificity calcium/calmodulin-dependent 3',5'-cyclic nucleotide phosphodiesterase 1C</fullName>
        <shortName>Cam-PDE 1C</shortName>
        <ecNumber evidence="8">3.1.4.17</ecNumber>
    </recommendedName>
</protein>
<keyword id="KW-0007">Acetylation</keyword>
<keyword id="KW-0112">Calmodulin-binding</keyword>
<keyword id="KW-0114">cAMP</keyword>
<keyword id="KW-0140">cGMP</keyword>
<keyword id="KW-0378">Hydrolase</keyword>
<keyword id="KW-0458">Lysosome</keyword>
<keyword id="KW-0460">Magnesium</keyword>
<keyword id="KW-0479">Metal-binding</keyword>
<keyword id="KW-0552">Olfaction</keyword>
<keyword id="KW-1185">Reference proteome</keyword>
<keyword id="KW-0716">Sensory transduction</keyword>
<keyword id="KW-0862">Zinc</keyword>
<organism>
    <name type="scientific">Rattus norvegicus</name>
    <name type="common">Rat</name>
    <dbReference type="NCBI Taxonomy" id="10116"/>
    <lineage>
        <taxon>Eukaryota</taxon>
        <taxon>Metazoa</taxon>
        <taxon>Chordata</taxon>
        <taxon>Craniata</taxon>
        <taxon>Vertebrata</taxon>
        <taxon>Euteleostomi</taxon>
        <taxon>Mammalia</taxon>
        <taxon>Eutheria</taxon>
        <taxon>Euarchontoglires</taxon>
        <taxon>Glires</taxon>
        <taxon>Rodentia</taxon>
        <taxon>Myomorpha</taxon>
        <taxon>Muroidea</taxon>
        <taxon>Muridae</taxon>
        <taxon>Murinae</taxon>
        <taxon>Rattus</taxon>
    </lineage>
</organism>
<evidence type="ECO:0000250" key="1">
    <source>
        <dbReference type="UniProtKB" id="O76083"/>
    </source>
</evidence>
<evidence type="ECO:0000250" key="2">
    <source>
        <dbReference type="UniProtKB" id="P14100"/>
    </source>
</evidence>
<evidence type="ECO:0000250" key="3">
    <source>
        <dbReference type="UniProtKB" id="Q01064"/>
    </source>
</evidence>
<evidence type="ECO:0000250" key="4">
    <source>
        <dbReference type="UniProtKB" id="Q14123"/>
    </source>
</evidence>
<evidence type="ECO:0000250" key="5">
    <source>
        <dbReference type="UniProtKB" id="Q64338"/>
    </source>
</evidence>
<evidence type="ECO:0000255" key="6">
    <source>
        <dbReference type="PROSITE-ProRule" id="PRU01192"/>
    </source>
</evidence>
<evidence type="ECO:0000256" key="7">
    <source>
        <dbReference type="SAM" id="MobiDB-lite"/>
    </source>
</evidence>
<evidence type="ECO:0000269" key="8">
    <source>
    </source>
</evidence>
<evidence type="ECO:0000303" key="9">
    <source>
    </source>
</evidence>
<evidence type="ECO:0000305" key="10"/>
<evidence type="ECO:0000305" key="11">
    <source>
    </source>
</evidence>
<evidence type="ECO:0000312" key="12">
    <source>
        <dbReference type="RGD" id="68332"/>
    </source>
</evidence>